<gene>
    <name evidence="1" type="primary">rpmB</name>
    <name type="ordered locus">lin1930</name>
</gene>
<proteinExistence type="inferred from homology"/>
<organism>
    <name type="scientific">Listeria innocua serovar 6a (strain ATCC BAA-680 / CLIP 11262)</name>
    <dbReference type="NCBI Taxonomy" id="272626"/>
    <lineage>
        <taxon>Bacteria</taxon>
        <taxon>Bacillati</taxon>
        <taxon>Bacillota</taxon>
        <taxon>Bacilli</taxon>
        <taxon>Bacillales</taxon>
        <taxon>Listeriaceae</taxon>
        <taxon>Listeria</taxon>
    </lineage>
</organism>
<feature type="chain" id="PRO_0000178495" description="Large ribosomal subunit protein bL28">
    <location>
        <begin position="1"/>
        <end position="62"/>
    </location>
</feature>
<feature type="region of interest" description="Disordered" evidence="2">
    <location>
        <begin position="1"/>
        <end position="27"/>
    </location>
</feature>
<feature type="compositionally biased region" description="Basic residues" evidence="2">
    <location>
        <begin position="10"/>
        <end position="20"/>
    </location>
</feature>
<evidence type="ECO:0000255" key="1">
    <source>
        <dbReference type="HAMAP-Rule" id="MF_00373"/>
    </source>
</evidence>
<evidence type="ECO:0000256" key="2">
    <source>
        <dbReference type="SAM" id="MobiDB-lite"/>
    </source>
</evidence>
<evidence type="ECO:0000305" key="3"/>
<protein>
    <recommendedName>
        <fullName evidence="1">Large ribosomal subunit protein bL28</fullName>
    </recommendedName>
    <alternativeName>
        <fullName evidence="3">50S ribosomal protein L28</fullName>
    </alternativeName>
</protein>
<name>RL28_LISIN</name>
<comment type="similarity">
    <text evidence="1">Belongs to the bacterial ribosomal protein bL28 family.</text>
</comment>
<sequence length="62" mass="6991">MAKECVITGRKSRSGNKRSHAMNSSKRTWKANLQKVRILVNGKPKKVWVSARALKSGKVERV</sequence>
<dbReference type="EMBL" id="AL596170">
    <property type="protein sequence ID" value="CAC97160.1"/>
    <property type="molecule type" value="Genomic_DNA"/>
</dbReference>
<dbReference type="PIR" id="AH1673">
    <property type="entry name" value="AH1673"/>
</dbReference>
<dbReference type="RefSeq" id="WP_003720131.1">
    <property type="nucleotide sequence ID" value="NC_003212.1"/>
</dbReference>
<dbReference type="SMR" id="P66145"/>
<dbReference type="STRING" id="272626.gene:17566288"/>
<dbReference type="GeneID" id="93239727"/>
<dbReference type="KEGG" id="lin:rpmB"/>
<dbReference type="eggNOG" id="COG0227">
    <property type="taxonomic scope" value="Bacteria"/>
</dbReference>
<dbReference type="HOGENOM" id="CLU_064548_7_1_9"/>
<dbReference type="OrthoDB" id="9805609at2"/>
<dbReference type="Proteomes" id="UP000002513">
    <property type="component" value="Chromosome"/>
</dbReference>
<dbReference type="GO" id="GO:1990904">
    <property type="term" value="C:ribonucleoprotein complex"/>
    <property type="evidence" value="ECO:0007669"/>
    <property type="project" value="UniProtKB-KW"/>
</dbReference>
<dbReference type="GO" id="GO:0005840">
    <property type="term" value="C:ribosome"/>
    <property type="evidence" value="ECO:0007669"/>
    <property type="project" value="UniProtKB-KW"/>
</dbReference>
<dbReference type="GO" id="GO:0003735">
    <property type="term" value="F:structural constituent of ribosome"/>
    <property type="evidence" value="ECO:0007669"/>
    <property type="project" value="InterPro"/>
</dbReference>
<dbReference type="GO" id="GO:0006412">
    <property type="term" value="P:translation"/>
    <property type="evidence" value="ECO:0007669"/>
    <property type="project" value="UniProtKB-UniRule"/>
</dbReference>
<dbReference type="Gene3D" id="2.30.170.40">
    <property type="entry name" value="Ribosomal protein L28/L24"/>
    <property type="match status" value="1"/>
</dbReference>
<dbReference type="HAMAP" id="MF_00373">
    <property type="entry name" value="Ribosomal_bL28"/>
    <property type="match status" value="1"/>
</dbReference>
<dbReference type="InterPro" id="IPR050096">
    <property type="entry name" value="Bacterial_rp_bL28"/>
</dbReference>
<dbReference type="InterPro" id="IPR026569">
    <property type="entry name" value="Ribosomal_bL28"/>
</dbReference>
<dbReference type="InterPro" id="IPR034704">
    <property type="entry name" value="Ribosomal_bL28/bL31-like_sf"/>
</dbReference>
<dbReference type="InterPro" id="IPR001383">
    <property type="entry name" value="Ribosomal_bL28_bact-type"/>
</dbReference>
<dbReference type="InterPro" id="IPR037147">
    <property type="entry name" value="Ribosomal_bL28_sf"/>
</dbReference>
<dbReference type="NCBIfam" id="TIGR00009">
    <property type="entry name" value="L28"/>
    <property type="match status" value="1"/>
</dbReference>
<dbReference type="PANTHER" id="PTHR39080">
    <property type="entry name" value="50S RIBOSOMAL PROTEIN L28"/>
    <property type="match status" value="1"/>
</dbReference>
<dbReference type="PANTHER" id="PTHR39080:SF1">
    <property type="entry name" value="LARGE RIBOSOMAL SUBUNIT PROTEIN BL28A"/>
    <property type="match status" value="1"/>
</dbReference>
<dbReference type="Pfam" id="PF00830">
    <property type="entry name" value="Ribosomal_L28"/>
    <property type="match status" value="1"/>
</dbReference>
<dbReference type="SUPFAM" id="SSF143800">
    <property type="entry name" value="L28p-like"/>
    <property type="match status" value="1"/>
</dbReference>
<keyword id="KW-0687">Ribonucleoprotein</keyword>
<keyword id="KW-0689">Ribosomal protein</keyword>
<accession>P66145</accession>
<accession>Q92AJ2</accession>
<reference key="1">
    <citation type="journal article" date="2001" name="Science">
        <title>Comparative genomics of Listeria species.</title>
        <authorList>
            <person name="Glaser P."/>
            <person name="Frangeul L."/>
            <person name="Buchrieser C."/>
            <person name="Rusniok C."/>
            <person name="Amend A."/>
            <person name="Baquero F."/>
            <person name="Berche P."/>
            <person name="Bloecker H."/>
            <person name="Brandt P."/>
            <person name="Chakraborty T."/>
            <person name="Charbit A."/>
            <person name="Chetouani F."/>
            <person name="Couve E."/>
            <person name="de Daruvar A."/>
            <person name="Dehoux P."/>
            <person name="Domann E."/>
            <person name="Dominguez-Bernal G."/>
            <person name="Duchaud E."/>
            <person name="Durant L."/>
            <person name="Dussurget O."/>
            <person name="Entian K.-D."/>
            <person name="Fsihi H."/>
            <person name="Garcia-del Portillo F."/>
            <person name="Garrido P."/>
            <person name="Gautier L."/>
            <person name="Goebel W."/>
            <person name="Gomez-Lopez N."/>
            <person name="Hain T."/>
            <person name="Hauf J."/>
            <person name="Jackson D."/>
            <person name="Jones L.-M."/>
            <person name="Kaerst U."/>
            <person name="Kreft J."/>
            <person name="Kuhn M."/>
            <person name="Kunst F."/>
            <person name="Kurapkat G."/>
            <person name="Madueno E."/>
            <person name="Maitournam A."/>
            <person name="Mata Vicente J."/>
            <person name="Ng E."/>
            <person name="Nedjari H."/>
            <person name="Nordsiek G."/>
            <person name="Novella S."/>
            <person name="de Pablos B."/>
            <person name="Perez-Diaz J.-C."/>
            <person name="Purcell R."/>
            <person name="Remmel B."/>
            <person name="Rose M."/>
            <person name="Schlueter T."/>
            <person name="Simoes N."/>
            <person name="Tierrez A."/>
            <person name="Vazquez-Boland J.-A."/>
            <person name="Voss H."/>
            <person name="Wehland J."/>
            <person name="Cossart P."/>
        </authorList>
    </citation>
    <scope>NUCLEOTIDE SEQUENCE [LARGE SCALE GENOMIC DNA]</scope>
    <source>
        <strain>ATCC BAA-680 / CLIP 11262</strain>
    </source>
</reference>